<evidence type="ECO:0000255" key="1">
    <source>
        <dbReference type="HAMAP-Rule" id="MF_01417"/>
    </source>
</evidence>
<proteinExistence type="inferred from homology"/>
<reference key="1">
    <citation type="journal article" date="2008" name="BMC Genomics">
        <title>The genome of Aeromonas salmonicida subsp. salmonicida A449: insights into the evolution of a fish pathogen.</title>
        <authorList>
            <person name="Reith M.E."/>
            <person name="Singh R.K."/>
            <person name="Curtis B."/>
            <person name="Boyd J.M."/>
            <person name="Bouevitch A."/>
            <person name="Kimball J."/>
            <person name="Munholland J."/>
            <person name="Murphy C."/>
            <person name="Sarty D."/>
            <person name="Williams J."/>
            <person name="Nash J.H."/>
            <person name="Johnson S.C."/>
            <person name="Brown L.L."/>
        </authorList>
    </citation>
    <scope>NUCLEOTIDE SEQUENCE [LARGE SCALE GENOMIC DNA]</scope>
    <source>
        <strain>A449</strain>
    </source>
</reference>
<comment type="function">
    <text evidence="1">Catalyzes the biosynthesis of agmatine from arginine.</text>
</comment>
<comment type="catalytic activity">
    <reaction evidence="1">
        <text>L-arginine + H(+) = agmatine + CO2</text>
        <dbReference type="Rhea" id="RHEA:17641"/>
        <dbReference type="ChEBI" id="CHEBI:15378"/>
        <dbReference type="ChEBI" id="CHEBI:16526"/>
        <dbReference type="ChEBI" id="CHEBI:32682"/>
        <dbReference type="ChEBI" id="CHEBI:58145"/>
        <dbReference type="EC" id="4.1.1.19"/>
    </reaction>
</comment>
<comment type="cofactor">
    <cofactor evidence="1">
        <name>Mg(2+)</name>
        <dbReference type="ChEBI" id="CHEBI:18420"/>
    </cofactor>
</comment>
<comment type="cofactor">
    <cofactor evidence="1">
        <name>pyridoxal 5'-phosphate</name>
        <dbReference type="ChEBI" id="CHEBI:597326"/>
    </cofactor>
</comment>
<comment type="pathway">
    <text evidence="1">Amine and polyamine biosynthesis; agmatine biosynthesis; agmatine from L-arginine: step 1/1.</text>
</comment>
<comment type="similarity">
    <text evidence="1">Belongs to the Orn/Lys/Arg decarboxylase class-II family. SpeA subfamily.</text>
</comment>
<accession>A4SPD6</accession>
<organism>
    <name type="scientific">Aeromonas salmonicida (strain A449)</name>
    <dbReference type="NCBI Taxonomy" id="382245"/>
    <lineage>
        <taxon>Bacteria</taxon>
        <taxon>Pseudomonadati</taxon>
        <taxon>Pseudomonadota</taxon>
        <taxon>Gammaproteobacteria</taxon>
        <taxon>Aeromonadales</taxon>
        <taxon>Aeromonadaceae</taxon>
        <taxon>Aeromonas</taxon>
    </lineage>
</organism>
<gene>
    <name evidence="1" type="primary">speA</name>
    <name type="ordered locus">ASA_2740</name>
</gene>
<dbReference type="EC" id="4.1.1.19" evidence="1"/>
<dbReference type="EMBL" id="CP000644">
    <property type="protein sequence ID" value="ABO90758.1"/>
    <property type="molecule type" value="Genomic_DNA"/>
</dbReference>
<dbReference type="RefSeq" id="WP_005309971.1">
    <property type="nucleotide sequence ID" value="NC_009348.1"/>
</dbReference>
<dbReference type="SMR" id="A4SPD6"/>
<dbReference type="STRING" id="29491.GCA_000820065_00073"/>
<dbReference type="KEGG" id="asa:ASA_2740"/>
<dbReference type="PATRIC" id="fig|382245.13.peg.2714"/>
<dbReference type="eggNOG" id="COG1166">
    <property type="taxonomic scope" value="Bacteria"/>
</dbReference>
<dbReference type="HOGENOM" id="CLU_027243_1_0_6"/>
<dbReference type="UniPathway" id="UPA00186">
    <property type="reaction ID" value="UER00284"/>
</dbReference>
<dbReference type="Proteomes" id="UP000000225">
    <property type="component" value="Chromosome"/>
</dbReference>
<dbReference type="GO" id="GO:0008792">
    <property type="term" value="F:arginine decarboxylase activity"/>
    <property type="evidence" value="ECO:0007669"/>
    <property type="project" value="UniProtKB-UniRule"/>
</dbReference>
<dbReference type="GO" id="GO:0046872">
    <property type="term" value="F:metal ion binding"/>
    <property type="evidence" value="ECO:0007669"/>
    <property type="project" value="UniProtKB-KW"/>
</dbReference>
<dbReference type="GO" id="GO:0006527">
    <property type="term" value="P:arginine catabolic process"/>
    <property type="evidence" value="ECO:0007669"/>
    <property type="project" value="InterPro"/>
</dbReference>
<dbReference type="GO" id="GO:0033388">
    <property type="term" value="P:putrescine biosynthetic process from arginine"/>
    <property type="evidence" value="ECO:0007669"/>
    <property type="project" value="TreeGrafter"/>
</dbReference>
<dbReference type="GO" id="GO:0008295">
    <property type="term" value="P:spermidine biosynthetic process"/>
    <property type="evidence" value="ECO:0007669"/>
    <property type="project" value="UniProtKB-UniRule"/>
</dbReference>
<dbReference type="CDD" id="cd06830">
    <property type="entry name" value="PLPDE_III_ADC"/>
    <property type="match status" value="1"/>
</dbReference>
<dbReference type="FunFam" id="3.20.20.10:FF:000001">
    <property type="entry name" value="Biosynthetic arginine decarboxylase"/>
    <property type="match status" value="1"/>
</dbReference>
<dbReference type="Gene3D" id="1.10.287.3440">
    <property type="match status" value="1"/>
</dbReference>
<dbReference type="Gene3D" id="1.20.58.930">
    <property type="match status" value="1"/>
</dbReference>
<dbReference type="Gene3D" id="3.20.20.10">
    <property type="entry name" value="Alanine racemase"/>
    <property type="match status" value="1"/>
</dbReference>
<dbReference type="Gene3D" id="2.40.37.10">
    <property type="entry name" value="Lyase, Ornithine Decarboxylase, Chain A, domain 1"/>
    <property type="match status" value="1"/>
</dbReference>
<dbReference type="HAMAP" id="MF_01417">
    <property type="entry name" value="SpeA"/>
    <property type="match status" value="1"/>
</dbReference>
<dbReference type="InterPro" id="IPR009006">
    <property type="entry name" value="Ala_racemase/Decarboxylase_C"/>
</dbReference>
<dbReference type="InterPro" id="IPR040634">
    <property type="entry name" value="Arg_decarb_HB"/>
</dbReference>
<dbReference type="InterPro" id="IPR041128">
    <property type="entry name" value="Arg_decarbox_C"/>
</dbReference>
<dbReference type="InterPro" id="IPR002985">
    <property type="entry name" value="Arg_decrbxlase"/>
</dbReference>
<dbReference type="InterPro" id="IPR022657">
    <property type="entry name" value="De-COase2_CS"/>
</dbReference>
<dbReference type="InterPro" id="IPR022644">
    <property type="entry name" value="De-COase2_N"/>
</dbReference>
<dbReference type="InterPro" id="IPR000183">
    <property type="entry name" value="Orn/DAP/Arg_de-COase"/>
</dbReference>
<dbReference type="InterPro" id="IPR029066">
    <property type="entry name" value="PLP-binding_barrel"/>
</dbReference>
<dbReference type="NCBIfam" id="NF003763">
    <property type="entry name" value="PRK05354.1"/>
    <property type="match status" value="1"/>
</dbReference>
<dbReference type="NCBIfam" id="TIGR01273">
    <property type="entry name" value="speA"/>
    <property type="match status" value="1"/>
</dbReference>
<dbReference type="PANTHER" id="PTHR43295">
    <property type="entry name" value="ARGININE DECARBOXYLASE"/>
    <property type="match status" value="1"/>
</dbReference>
<dbReference type="PANTHER" id="PTHR43295:SF9">
    <property type="entry name" value="BIOSYNTHETIC ARGININE DECARBOXYLASE"/>
    <property type="match status" value="1"/>
</dbReference>
<dbReference type="Pfam" id="PF17810">
    <property type="entry name" value="Arg_decarb_HB"/>
    <property type="match status" value="1"/>
</dbReference>
<dbReference type="Pfam" id="PF17944">
    <property type="entry name" value="Arg_decarbox_C"/>
    <property type="match status" value="1"/>
</dbReference>
<dbReference type="Pfam" id="PF02784">
    <property type="entry name" value="Orn_Arg_deC_N"/>
    <property type="match status" value="1"/>
</dbReference>
<dbReference type="PIRSF" id="PIRSF001336">
    <property type="entry name" value="Arg_decrbxlase"/>
    <property type="match status" value="1"/>
</dbReference>
<dbReference type="PRINTS" id="PR01180">
    <property type="entry name" value="ARGDCRBXLASE"/>
</dbReference>
<dbReference type="PRINTS" id="PR01179">
    <property type="entry name" value="ODADCRBXLASE"/>
</dbReference>
<dbReference type="SUPFAM" id="SSF51419">
    <property type="entry name" value="PLP-binding barrel"/>
    <property type="match status" value="1"/>
</dbReference>
<dbReference type="PROSITE" id="PS00879">
    <property type="entry name" value="ODR_DC_2_2"/>
    <property type="match status" value="1"/>
</dbReference>
<keyword id="KW-0210">Decarboxylase</keyword>
<keyword id="KW-0456">Lyase</keyword>
<keyword id="KW-0460">Magnesium</keyword>
<keyword id="KW-0479">Metal-binding</keyword>
<keyword id="KW-0620">Polyamine biosynthesis</keyword>
<keyword id="KW-0663">Pyridoxal phosphate</keyword>
<keyword id="KW-0745">Spermidine biosynthesis</keyword>
<protein>
    <recommendedName>
        <fullName evidence="1">Biosynthetic arginine decarboxylase</fullName>
        <shortName evidence="1">ADC</shortName>
        <ecNumber evidence="1">4.1.1.19</ecNumber>
    </recommendedName>
</protein>
<sequence>MTNWSSKDSLKVYNVPYWGAGFFNINDAGHVTVAPDKSRPDAHIVISDAIEQLRQSGLTTPVLLRFPDILKSRVDALFNAFGQAIEKSGYEGDYLCVYPIKVNQQSRVIETISQSYSDKPRLGLEAGSKPELLAVLSHHHEQGSVIVCNGYKDREYIRHALLGNLMGHKVYIVVEKPSELEMVLDESARLNIKPNIGVRAKLASTGSGMWESSGGSMSKFGLSASQILALVERLRSLDKLDCLQLLHFHLGSQIANIRDIQGGIRECGRFYSELRRLGVPIDVVDVGGGLGVDYEGTRSQSHCSANYSLSEYANNVVWGIGDVCREFDLPYPTIISESGRALTAHHAVLVTNLIGAEGVEMSDISAPDEDAPTLLQNMWQGWLDLRGEDPSLLEIFHDSVADLGDVNTQYTMGLLNLEQRAWAEMLHQNTCLALKEMLNPVNRNHRALADELSEKLADKCFANFSLFQSLPDAWGIGQVFPVMPLTGLDRPLSRRGILMDITCDSDGQVEHYVDGLGVESTLPMPQYEENEVCYVGFFLVGAYQEILGDLHNLFGDTHCAEVCLDEEGKMDIRNVVRGDTVDQLLRYVNIDPSVIRENYQRIVSHPALDDATRKALLDELELGLQGYAYLEDE</sequence>
<name>SPEA_AERS4</name>
<feature type="chain" id="PRO_1000024252" description="Biosynthetic arginine decarboxylase">
    <location>
        <begin position="1"/>
        <end position="633"/>
    </location>
</feature>
<feature type="binding site" evidence="1">
    <location>
        <begin position="284"/>
        <end position="294"/>
    </location>
    <ligand>
        <name>substrate</name>
    </ligand>
</feature>
<feature type="modified residue" description="N6-(pyridoxal phosphate)lysine" evidence="1">
    <location>
        <position position="101"/>
    </location>
</feature>